<reference key="1">
    <citation type="journal article" date="2003" name="Mol. Microbiol.">
        <title>An integrated analysis of the genome of the hyperthermophilic archaeon Pyrococcus abyssi.</title>
        <authorList>
            <person name="Cohen G.N."/>
            <person name="Barbe V."/>
            <person name="Flament D."/>
            <person name="Galperin M."/>
            <person name="Heilig R."/>
            <person name="Lecompte O."/>
            <person name="Poch O."/>
            <person name="Prieur D."/>
            <person name="Querellou J."/>
            <person name="Ripp R."/>
            <person name="Thierry J.-C."/>
            <person name="Van der Oost J."/>
            <person name="Weissenbach J."/>
            <person name="Zivanovic Y."/>
            <person name="Forterre P."/>
        </authorList>
    </citation>
    <scope>NUCLEOTIDE SEQUENCE [LARGE SCALE GENOMIC DNA]</scope>
    <source>
        <strain>GE5 / Orsay</strain>
    </source>
</reference>
<reference key="2">
    <citation type="journal article" date="2012" name="Curr. Microbiol.">
        <title>Re-annotation of two hyperthermophilic archaea Pyrococcus abyssi GE5 and Pyrococcus furiosus DSM 3638.</title>
        <authorList>
            <person name="Gao J."/>
            <person name="Wang J."/>
        </authorList>
    </citation>
    <scope>GENOME REANNOTATION</scope>
    <source>
        <strain>GE5 / Orsay</strain>
    </source>
</reference>
<gene>
    <name evidence="1" type="primary">rps24e</name>
    <name type="ordered locus">PYRAB16880</name>
    <name type="ORF">PAB3419</name>
</gene>
<accession>Q9UY20</accession>
<accession>G8ZK49</accession>
<name>RS24_PYRAB</name>
<proteinExistence type="evidence at protein level"/>
<comment type="similarity">
    <text evidence="1">Belongs to the eukaryotic ribosomal protein eS24 family.</text>
</comment>
<organism>
    <name type="scientific">Pyrococcus abyssi (strain GE5 / Orsay)</name>
    <dbReference type="NCBI Taxonomy" id="272844"/>
    <lineage>
        <taxon>Archaea</taxon>
        <taxon>Methanobacteriati</taxon>
        <taxon>Methanobacteriota</taxon>
        <taxon>Thermococci</taxon>
        <taxon>Thermococcales</taxon>
        <taxon>Thermococcaceae</taxon>
        <taxon>Pyrococcus</taxon>
    </lineage>
</organism>
<keyword id="KW-0002">3D-structure</keyword>
<keyword id="KW-0687">Ribonucleoprotein</keyword>
<keyword id="KW-0689">Ribosomal protein</keyword>
<sequence>MEIKITEVKENKLIGRKEIYFEIYHPGEPTPSRKDVKGKLVAMLDLNPETTVIQYIRSYFGSYKSKGYAKYYYDKDRMLYIEPEYILIRDGIIEKKEGE</sequence>
<protein>
    <recommendedName>
        <fullName evidence="1">Small ribosomal subunit protein eS24</fullName>
    </recommendedName>
    <alternativeName>
        <fullName evidence="2">30S ribosomal protein S24e</fullName>
    </alternativeName>
</protein>
<feature type="chain" id="PRO_0000137650" description="Small ribosomal subunit protein eS24">
    <location>
        <begin position="1"/>
        <end position="99"/>
    </location>
</feature>
<feature type="strand" evidence="3">
    <location>
        <begin position="2"/>
        <end position="11"/>
    </location>
</feature>
<feature type="turn" evidence="3">
    <location>
        <begin position="12"/>
        <end position="15"/>
    </location>
</feature>
<feature type="strand" evidence="3">
    <location>
        <begin position="16"/>
        <end position="24"/>
    </location>
</feature>
<feature type="helix" evidence="3">
    <location>
        <begin position="33"/>
        <end position="44"/>
    </location>
</feature>
<feature type="helix" evidence="3">
    <location>
        <begin position="48"/>
        <end position="50"/>
    </location>
</feature>
<feature type="strand" evidence="3">
    <location>
        <begin position="51"/>
        <end position="57"/>
    </location>
</feature>
<feature type="strand" evidence="3">
    <location>
        <begin position="63"/>
        <end position="74"/>
    </location>
</feature>
<feature type="helix" evidence="3">
    <location>
        <begin position="75"/>
        <end position="81"/>
    </location>
</feature>
<feature type="helix" evidence="3">
    <location>
        <begin position="84"/>
        <end position="89"/>
    </location>
</feature>
<dbReference type="EMBL" id="AJ248288">
    <property type="protein sequence ID" value="CAB50592.1"/>
    <property type="molecule type" value="Genomic_DNA"/>
</dbReference>
<dbReference type="EMBL" id="HE613800">
    <property type="protein sequence ID" value="CCE71156.1"/>
    <property type="molecule type" value="Genomic_DNA"/>
</dbReference>
<dbReference type="PIR" id="B75019">
    <property type="entry name" value="B75019"/>
</dbReference>
<dbReference type="RefSeq" id="WP_010868806.1">
    <property type="nucleotide sequence ID" value="NC_000868.1"/>
</dbReference>
<dbReference type="PDB" id="2V94">
    <property type="method" value="X-ray"/>
    <property type="resolution" value="1.90 A"/>
    <property type="chains" value="A/B=1-99"/>
</dbReference>
<dbReference type="PDB" id="6SW9">
    <property type="method" value="EM"/>
    <property type="resolution" value="4.20 A"/>
    <property type="chains" value="V=1-99"/>
</dbReference>
<dbReference type="PDB" id="6SWC">
    <property type="method" value="EM"/>
    <property type="resolution" value="3.30 A"/>
    <property type="chains" value="V=1-99"/>
</dbReference>
<dbReference type="PDB" id="6SWD">
    <property type="method" value="EM"/>
    <property type="resolution" value="3.20 A"/>
    <property type="chains" value="V=1-99"/>
</dbReference>
<dbReference type="PDB" id="7ZAG">
    <property type="method" value="EM"/>
    <property type="resolution" value="2.77 A"/>
    <property type="chains" value="V=1-99"/>
</dbReference>
<dbReference type="PDB" id="7ZAH">
    <property type="method" value="EM"/>
    <property type="resolution" value="2.70 A"/>
    <property type="chains" value="V=1-99"/>
</dbReference>
<dbReference type="PDB" id="7ZAI">
    <property type="method" value="EM"/>
    <property type="resolution" value="2.60 A"/>
    <property type="chains" value="V=1-99"/>
</dbReference>
<dbReference type="PDB" id="7ZHG">
    <property type="method" value="EM"/>
    <property type="resolution" value="2.25 A"/>
    <property type="chains" value="V=1-99"/>
</dbReference>
<dbReference type="PDBsum" id="2V94"/>
<dbReference type="PDBsum" id="6SW9"/>
<dbReference type="PDBsum" id="6SWC"/>
<dbReference type="PDBsum" id="6SWD"/>
<dbReference type="PDBsum" id="7ZAG"/>
<dbReference type="PDBsum" id="7ZAH"/>
<dbReference type="PDBsum" id="7ZAI"/>
<dbReference type="PDBsum" id="7ZHG"/>
<dbReference type="EMDB" id="EMD-10320"/>
<dbReference type="EMDB" id="EMD-10322"/>
<dbReference type="EMDB" id="EMD-10323"/>
<dbReference type="EMDB" id="EMD-14579"/>
<dbReference type="EMDB" id="EMD-14580"/>
<dbReference type="EMDB" id="EMD-14581"/>
<dbReference type="EMDB" id="EMD-14731"/>
<dbReference type="EMDB" id="EMD-8148"/>
<dbReference type="SMR" id="Q9UY20"/>
<dbReference type="STRING" id="272844.PAB3419"/>
<dbReference type="KEGG" id="pab:PAB3419"/>
<dbReference type="PATRIC" id="fig|272844.11.peg.1802"/>
<dbReference type="eggNOG" id="arCOG04182">
    <property type="taxonomic scope" value="Archaea"/>
</dbReference>
<dbReference type="HOGENOM" id="CLU_107248_3_2_2"/>
<dbReference type="OrthoDB" id="27533at2157"/>
<dbReference type="PhylomeDB" id="Q9UY20"/>
<dbReference type="EvolutionaryTrace" id="Q9UY20"/>
<dbReference type="Proteomes" id="UP000000810">
    <property type="component" value="Chromosome"/>
</dbReference>
<dbReference type="Proteomes" id="UP000009139">
    <property type="component" value="Chromosome"/>
</dbReference>
<dbReference type="GO" id="GO:1990904">
    <property type="term" value="C:ribonucleoprotein complex"/>
    <property type="evidence" value="ECO:0007669"/>
    <property type="project" value="UniProtKB-KW"/>
</dbReference>
<dbReference type="GO" id="GO:0005840">
    <property type="term" value="C:ribosome"/>
    <property type="evidence" value="ECO:0007669"/>
    <property type="project" value="UniProtKB-KW"/>
</dbReference>
<dbReference type="GO" id="GO:0003735">
    <property type="term" value="F:structural constituent of ribosome"/>
    <property type="evidence" value="ECO:0007669"/>
    <property type="project" value="InterPro"/>
</dbReference>
<dbReference type="GO" id="GO:0006412">
    <property type="term" value="P:translation"/>
    <property type="evidence" value="ECO:0007669"/>
    <property type="project" value="UniProtKB-UniRule"/>
</dbReference>
<dbReference type="Gene3D" id="3.30.70.330">
    <property type="match status" value="1"/>
</dbReference>
<dbReference type="HAMAP" id="MF_00545">
    <property type="entry name" value="Ribosomal_eS24"/>
    <property type="match status" value="1"/>
</dbReference>
<dbReference type="InterPro" id="IPR012677">
    <property type="entry name" value="Nucleotide-bd_a/b_plait_sf"/>
</dbReference>
<dbReference type="InterPro" id="IPR001976">
    <property type="entry name" value="Ribosomal_eS24"/>
</dbReference>
<dbReference type="InterPro" id="IPR018098">
    <property type="entry name" value="Ribosomal_eS24_CS"/>
</dbReference>
<dbReference type="InterPro" id="IPR012678">
    <property type="entry name" value="Ribosomal_uL23/eL15/eS24_sf"/>
</dbReference>
<dbReference type="PANTHER" id="PTHR10496">
    <property type="entry name" value="40S RIBOSOMAL PROTEIN S24"/>
    <property type="match status" value="1"/>
</dbReference>
<dbReference type="Pfam" id="PF01282">
    <property type="entry name" value="Ribosomal_S24e"/>
    <property type="match status" value="1"/>
</dbReference>
<dbReference type="SUPFAM" id="SSF54189">
    <property type="entry name" value="Ribosomal proteins S24e, L23 and L15e"/>
    <property type="match status" value="1"/>
</dbReference>
<dbReference type="PROSITE" id="PS00529">
    <property type="entry name" value="RIBOSOMAL_S24E"/>
    <property type="match status" value="1"/>
</dbReference>
<evidence type="ECO:0000255" key="1">
    <source>
        <dbReference type="HAMAP-Rule" id="MF_00545"/>
    </source>
</evidence>
<evidence type="ECO:0000305" key="2"/>
<evidence type="ECO:0007829" key="3">
    <source>
        <dbReference type="PDB" id="2V94"/>
    </source>
</evidence>